<feature type="chain" id="PRO_0000334111" description="Cell division protein SepF">
    <location>
        <begin position="1"/>
        <end position="187"/>
    </location>
</feature>
<proteinExistence type="inferred from homology"/>
<keyword id="KW-0131">Cell cycle</keyword>
<keyword id="KW-0132">Cell division</keyword>
<keyword id="KW-0963">Cytoplasm</keyword>
<keyword id="KW-0717">Septation</keyword>
<organism>
    <name type="scientific">Streptococcus suis (strain 98HAH33)</name>
    <dbReference type="NCBI Taxonomy" id="391296"/>
    <lineage>
        <taxon>Bacteria</taxon>
        <taxon>Bacillati</taxon>
        <taxon>Bacillota</taxon>
        <taxon>Bacilli</taxon>
        <taxon>Lactobacillales</taxon>
        <taxon>Streptococcaceae</taxon>
        <taxon>Streptococcus</taxon>
    </lineage>
</organism>
<comment type="function">
    <text evidence="1">Cell division protein that is part of the divisome complex and is recruited early to the Z-ring. Probably stimulates Z-ring formation, perhaps through the cross-linking of FtsZ protofilaments. Its function overlaps with FtsA.</text>
</comment>
<comment type="subunit">
    <text evidence="1">Homodimer. Interacts with FtsZ.</text>
</comment>
<comment type="subcellular location">
    <subcellularLocation>
        <location evidence="1">Cytoplasm</location>
    </subcellularLocation>
    <text evidence="1">Localizes to the division site, in a FtsZ-dependent manner.</text>
</comment>
<comment type="similarity">
    <text evidence="1">Belongs to the SepF family.</text>
</comment>
<comment type="sequence caution" evidence="2">
    <conflict type="erroneous initiation">
        <sequence resource="EMBL-CDS" id="ABP91636"/>
    </conflict>
</comment>
<name>SEPF_STRS2</name>
<reference key="1">
    <citation type="journal article" date="2007" name="PLoS ONE">
        <title>A glimpse of streptococcal toxic shock syndrome from comparative genomics of S. suis 2 Chinese isolates.</title>
        <authorList>
            <person name="Chen C."/>
            <person name="Tang J."/>
            <person name="Dong W."/>
            <person name="Wang C."/>
            <person name="Feng Y."/>
            <person name="Wang J."/>
            <person name="Zheng F."/>
            <person name="Pan X."/>
            <person name="Liu D."/>
            <person name="Li M."/>
            <person name="Song Y."/>
            <person name="Zhu X."/>
            <person name="Sun H."/>
            <person name="Feng T."/>
            <person name="Guo Z."/>
            <person name="Ju A."/>
            <person name="Ge J."/>
            <person name="Dong Y."/>
            <person name="Sun W."/>
            <person name="Jiang Y."/>
            <person name="Wang J."/>
            <person name="Yan J."/>
            <person name="Yang H."/>
            <person name="Wang X."/>
            <person name="Gao G.F."/>
            <person name="Yang R."/>
            <person name="Wang J."/>
            <person name="Yu J."/>
        </authorList>
    </citation>
    <scope>NUCLEOTIDE SEQUENCE [LARGE SCALE GENOMIC DNA]</scope>
    <source>
        <strain>98HAH33</strain>
    </source>
</reference>
<gene>
    <name evidence="1" type="primary">sepF</name>
    <name type="ordered locus">SSU98_0478</name>
</gene>
<sequence>MALKDTFKNLFNYFEVDEVNEVEEQADAYSMPNDRPKMRVANTTVAPVREQQPKVETRREARSESQLQRLHERQQELMTNNNEKEIVKTTIDIKFPKRYEDAPEMVNLLLDNASILIDFQYMSEQQARRCLDYLDGARSVLSGNLKKVSNTMWLLTPVNVTVNIEELRNAGTTTGVADSNFEFDIKR</sequence>
<accession>A4VZU7</accession>
<evidence type="ECO:0000255" key="1">
    <source>
        <dbReference type="HAMAP-Rule" id="MF_01197"/>
    </source>
</evidence>
<evidence type="ECO:0000305" key="2"/>
<dbReference type="EMBL" id="CP000408">
    <property type="protein sequence ID" value="ABP91636.1"/>
    <property type="status" value="ALT_INIT"/>
    <property type="molecule type" value="Genomic_DNA"/>
</dbReference>
<dbReference type="SMR" id="A4VZU7"/>
<dbReference type="KEGG" id="ssv:SSU98_0478"/>
<dbReference type="HOGENOM" id="CLU_078499_2_0_9"/>
<dbReference type="GO" id="GO:0005737">
    <property type="term" value="C:cytoplasm"/>
    <property type="evidence" value="ECO:0007669"/>
    <property type="project" value="UniProtKB-SubCell"/>
</dbReference>
<dbReference type="GO" id="GO:0000917">
    <property type="term" value="P:division septum assembly"/>
    <property type="evidence" value="ECO:0007669"/>
    <property type="project" value="UniProtKB-KW"/>
</dbReference>
<dbReference type="GO" id="GO:0043093">
    <property type="term" value="P:FtsZ-dependent cytokinesis"/>
    <property type="evidence" value="ECO:0007669"/>
    <property type="project" value="UniProtKB-UniRule"/>
</dbReference>
<dbReference type="Gene3D" id="3.30.110.150">
    <property type="entry name" value="SepF-like protein"/>
    <property type="match status" value="1"/>
</dbReference>
<dbReference type="HAMAP" id="MF_01197">
    <property type="entry name" value="SepF"/>
    <property type="match status" value="1"/>
</dbReference>
<dbReference type="InterPro" id="IPR023052">
    <property type="entry name" value="Cell_div_SepF"/>
</dbReference>
<dbReference type="InterPro" id="IPR007561">
    <property type="entry name" value="Cell_div_SepF/SepF-rel"/>
</dbReference>
<dbReference type="InterPro" id="IPR038594">
    <property type="entry name" value="SepF-like_sf"/>
</dbReference>
<dbReference type="PANTHER" id="PTHR35798">
    <property type="entry name" value="CELL DIVISION PROTEIN SEPF"/>
    <property type="match status" value="1"/>
</dbReference>
<dbReference type="PANTHER" id="PTHR35798:SF1">
    <property type="entry name" value="CELL DIVISION PROTEIN SEPF"/>
    <property type="match status" value="1"/>
</dbReference>
<dbReference type="Pfam" id="PF04472">
    <property type="entry name" value="SepF"/>
    <property type="match status" value="1"/>
</dbReference>
<protein>
    <recommendedName>
        <fullName evidence="1">Cell division protein SepF</fullName>
    </recommendedName>
</protein>